<reference key="1">
    <citation type="journal article" date="2009" name="J. Bacteriol.">
        <title>Genomic sequencing reveals regulatory mutations and recombinational events in the widely used MC4100 lineage of Escherichia coli K-12.</title>
        <authorList>
            <person name="Ferenci T."/>
            <person name="Zhou Z."/>
            <person name="Betteridge T."/>
            <person name="Ren Y."/>
            <person name="Liu Y."/>
            <person name="Feng L."/>
            <person name="Reeves P.R."/>
            <person name="Wang L."/>
        </authorList>
    </citation>
    <scope>NUCLEOTIDE SEQUENCE [LARGE SCALE GENOMIC DNA]</scope>
    <source>
        <strain>K12 / MC4100 / BW2952</strain>
    </source>
</reference>
<organism>
    <name type="scientific">Escherichia coli (strain K12 / MC4100 / BW2952)</name>
    <dbReference type="NCBI Taxonomy" id="595496"/>
    <lineage>
        <taxon>Bacteria</taxon>
        <taxon>Pseudomonadati</taxon>
        <taxon>Pseudomonadota</taxon>
        <taxon>Gammaproteobacteria</taxon>
        <taxon>Enterobacterales</taxon>
        <taxon>Enterobacteriaceae</taxon>
        <taxon>Escherichia</taxon>
    </lineage>
</organism>
<evidence type="ECO:0000255" key="1">
    <source>
        <dbReference type="HAMAP-Rule" id="MF_00127"/>
    </source>
</evidence>
<accession>C4ZX89</accession>
<dbReference type="EC" id="6.1.1.21" evidence="1"/>
<dbReference type="EMBL" id="CP001396">
    <property type="protein sequence ID" value="ACR63423.1"/>
    <property type="molecule type" value="Genomic_DNA"/>
</dbReference>
<dbReference type="RefSeq" id="WP_001107167.1">
    <property type="nucleotide sequence ID" value="NC_012759.1"/>
</dbReference>
<dbReference type="SMR" id="C4ZX89"/>
<dbReference type="GeneID" id="75206207"/>
<dbReference type="KEGG" id="ebw:BWG_2278"/>
<dbReference type="HOGENOM" id="CLU_025113_1_1_6"/>
<dbReference type="GO" id="GO:0005737">
    <property type="term" value="C:cytoplasm"/>
    <property type="evidence" value="ECO:0007669"/>
    <property type="project" value="UniProtKB-SubCell"/>
</dbReference>
<dbReference type="GO" id="GO:0005524">
    <property type="term" value="F:ATP binding"/>
    <property type="evidence" value="ECO:0007669"/>
    <property type="project" value="UniProtKB-UniRule"/>
</dbReference>
<dbReference type="GO" id="GO:0004821">
    <property type="term" value="F:histidine-tRNA ligase activity"/>
    <property type="evidence" value="ECO:0007669"/>
    <property type="project" value="UniProtKB-UniRule"/>
</dbReference>
<dbReference type="GO" id="GO:0006427">
    <property type="term" value="P:histidyl-tRNA aminoacylation"/>
    <property type="evidence" value="ECO:0007669"/>
    <property type="project" value="UniProtKB-UniRule"/>
</dbReference>
<dbReference type="CDD" id="cd00773">
    <property type="entry name" value="HisRS-like_core"/>
    <property type="match status" value="1"/>
</dbReference>
<dbReference type="CDD" id="cd00859">
    <property type="entry name" value="HisRS_anticodon"/>
    <property type="match status" value="1"/>
</dbReference>
<dbReference type="FunFam" id="3.30.930.10:FF:000005">
    <property type="entry name" value="Histidine--tRNA ligase"/>
    <property type="match status" value="1"/>
</dbReference>
<dbReference type="FunFam" id="3.40.50.800:FF:000007">
    <property type="entry name" value="Histidine--tRNA ligase"/>
    <property type="match status" value="1"/>
</dbReference>
<dbReference type="Gene3D" id="3.40.50.800">
    <property type="entry name" value="Anticodon-binding domain"/>
    <property type="match status" value="1"/>
</dbReference>
<dbReference type="Gene3D" id="3.30.930.10">
    <property type="entry name" value="Bira Bifunctional Protein, Domain 2"/>
    <property type="match status" value="1"/>
</dbReference>
<dbReference type="HAMAP" id="MF_00127">
    <property type="entry name" value="His_tRNA_synth"/>
    <property type="match status" value="1"/>
</dbReference>
<dbReference type="InterPro" id="IPR006195">
    <property type="entry name" value="aa-tRNA-synth_II"/>
</dbReference>
<dbReference type="InterPro" id="IPR045864">
    <property type="entry name" value="aa-tRNA-synth_II/BPL/LPL"/>
</dbReference>
<dbReference type="InterPro" id="IPR004154">
    <property type="entry name" value="Anticodon-bd"/>
</dbReference>
<dbReference type="InterPro" id="IPR036621">
    <property type="entry name" value="Anticodon-bd_dom_sf"/>
</dbReference>
<dbReference type="InterPro" id="IPR015807">
    <property type="entry name" value="His-tRNA-ligase"/>
</dbReference>
<dbReference type="InterPro" id="IPR041715">
    <property type="entry name" value="HisRS-like_core"/>
</dbReference>
<dbReference type="InterPro" id="IPR004516">
    <property type="entry name" value="HisRS/HisZ"/>
</dbReference>
<dbReference type="InterPro" id="IPR033656">
    <property type="entry name" value="HisRS_anticodon"/>
</dbReference>
<dbReference type="NCBIfam" id="TIGR00442">
    <property type="entry name" value="hisS"/>
    <property type="match status" value="1"/>
</dbReference>
<dbReference type="PANTHER" id="PTHR43707:SF1">
    <property type="entry name" value="HISTIDINE--TRNA LIGASE, MITOCHONDRIAL-RELATED"/>
    <property type="match status" value="1"/>
</dbReference>
<dbReference type="PANTHER" id="PTHR43707">
    <property type="entry name" value="HISTIDYL-TRNA SYNTHETASE"/>
    <property type="match status" value="1"/>
</dbReference>
<dbReference type="Pfam" id="PF03129">
    <property type="entry name" value="HGTP_anticodon"/>
    <property type="match status" value="1"/>
</dbReference>
<dbReference type="Pfam" id="PF13393">
    <property type="entry name" value="tRNA-synt_His"/>
    <property type="match status" value="1"/>
</dbReference>
<dbReference type="PIRSF" id="PIRSF001549">
    <property type="entry name" value="His-tRNA_synth"/>
    <property type="match status" value="1"/>
</dbReference>
<dbReference type="SUPFAM" id="SSF52954">
    <property type="entry name" value="Class II aaRS ABD-related"/>
    <property type="match status" value="1"/>
</dbReference>
<dbReference type="SUPFAM" id="SSF55681">
    <property type="entry name" value="Class II aaRS and biotin synthetases"/>
    <property type="match status" value="1"/>
</dbReference>
<dbReference type="PROSITE" id="PS50862">
    <property type="entry name" value="AA_TRNA_LIGASE_II"/>
    <property type="match status" value="1"/>
</dbReference>
<feature type="chain" id="PRO_1000203134" description="Histidine--tRNA ligase">
    <location>
        <begin position="1"/>
        <end position="424"/>
    </location>
</feature>
<protein>
    <recommendedName>
        <fullName evidence="1">Histidine--tRNA ligase</fullName>
        <ecNumber evidence="1">6.1.1.21</ecNumber>
    </recommendedName>
    <alternativeName>
        <fullName evidence="1">Histidyl-tRNA synthetase</fullName>
        <shortName evidence="1">HisRS</shortName>
    </alternativeName>
</protein>
<sequence>MAKNIQAIRGMNDYLPGETAIWQRIEGTLKNVLGSYGYSEIRLPIVEQTPLFKRAIGEVTDVVEKEMYTFEDRNGDSLTLRPEGTAGCVRAGIEHGLLYNQEQRLWYIGPMFRHERPQKGRYRQFHQLGCEVFGLQGPDIDAELIMLTARWWRALGISEHVTLELNSIGSLEARANYRDALVAFLEQHKEKLDEDCKRRMYTNPLRVLDSKNPEVQALLNDAPALGDYLDEESREHFAGLCKLLESAGIAYTVNQRLVRGLDYYNRTVFEWVTNSLGSQGTVCAGGRYDGLVEQLGGRATPAVGFAMGLERLVLLVQAVNPEFKADPVVDIYLVASGADTQSAAMALAERLRDELPGVKLMTNHGGGNFKKQFARADKWGARVAVVLGESEVANGTAVVKDLRSGEQTAVAQDSVAAHLRTLLG</sequence>
<comment type="catalytic activity">
    <reaction evidence="1">
        <text>tRNA(His) + L-histidine + ATP = L-histidyl-tRNA(His) + AMP + diphosphate + H(+)</text>
        <dbReference type="Rhea" id="RHEA:17313"/>
        <dbReference type="Rhea" id="RHEA-COMP:9665"/>
        <dbReference type="Rhea" id="RHEA-COMP:9689"/>
        <dbReference type="ChEBI" id="CHEBI:15378"/>
        <dbReference type="ChEBI" id="CHEBI:30616"/>
        <dbReference type="ChEBI" id="CHEBI:33019"/>
        <dbReference type="ChEBI" id="CHEBI:57595"/>
        <dbReference type="ChEBI" id="CHEBI:78442"/>
        <dbReference type="ChEBI" id="CHEBI:78527"/>
        <dbReference type="ChEBI" id="CHEBI:456215"/>
        <dbReference type="EC" id="6.1.1.21"/>
    </reaction>
</comment>
<comment type="subunit">
    <text evidence="1">Homodimer.</text>
</comment>
<comment type="subcellular location">
    <subcellularLocation>
        <location evidence="1">Cytoplasm</location>
    </subcellularLocation>
</comment>
<comment type="similarity">
    <text evidence="1">Belongs to the class-II aminoacyl-tRNA synthetase family.</text>
</comment>
<keyword id="KW-0030">Aminoacyl-tRNA synthetase</keyword>
<keyword id="KW-0067">ATP-binding</keyword>
<keyword id="KW-0963">Cytoplasm</keyword>
<keyword id="KW-0436">Ligase</keyword>
<keyword id="KW-0547">Nucleotide-binding</keyword>
<keyword id="KW-0648">Protein biosynthesis</keyword>
<proteinExistence type="inferred from homology"/>
<gene>
    <name evidence="1" type="primary">hisS</name>
    <name type="ordered locus">BWG_2278</name>
</gene>
<name>SYH_ECOBW</name>